<comment type="subcellular location">
    <subcellularLocation>
        <location evidence="1">Cell membrane</location>
        <topology evidence="1">Multi-pass membrane protein</topology>
    </subcellularLocation>
</comment>
<comment type="similarity">
    <text evidence="1">Belongs to the UPF0391 family.</text>
</comment>
<reference key="1">
    <citation type="journal article" date="2006" name="J. Bacteriol.">
        <title>Complete genome sequence of Yersinia pestis strains Antiqua and Nepal516: evidence of gene reduction in an emerging pathogen.</title>
        <authorList>
            <person name="Chain P.S.G."/>
            <person name="Hu P."/>
            <person name="Malfatti S.A."/>
            <person name="Radnedge L."/>
            <person name="Larimer F."/>
            <person name="Vergez L.M."/>
            <person name="Worsham P."/>
            <person name="Chu M.C."/>
            <person name="Andersen G.L."/>
        </authorList>
    </citation>
    <scope>NUCLEOTIDE SEQUENCE [LARGE SCALE GENOMIC DNA]</scope>
    <source>
        <strain>Antiqua</strain>
    </source>
</reference>
<keyword id="KW-1003">Cell membrane</keyword>
<keyword id="KW-0472">Membrane</keyword>
<keyword id="KW-0812">Transmembrane</keyword>
<keyword id="KW-1133">Transmembrane helix</keyword>
<feature type="chain" id="PRO_0000256809" description="UPF0391 membrane protein YPA_3852">
    <location>
        <begin position="1"/>
        <end position="53"/>
    </location>
</feature>
<feature type="transmembrane region" description="Helical" evidence="1">
    <location>
        <begin position="4"/>
        <end position="24"/>
    </location>
</feature>
<feature type="transmembrane region" description="Helical" evidence="1">
    <location>
        <begin position="27"/>
        <end position="47"/>
    </location>
</feature>
<dbReference type="EMBL" id="CP000308">
    <property type="protein sequence ID" value="ABG15814.1"/>
    <property type="molecule type" value="Genomic_DNA"/>
</dbReference>
<dbReference type="RefSeq" id="WP_002209211.1">
    <property type="nucleotide sequence ID" value="NZ_CP009906.1"/>
</dbReference>
<dbReference type="KEGG" id="ypa:YPA_3852"/>
<dbReference type="Proteomes" id="UP000001971">
    <property type="component" value="Chromosome"/>
</dbReference>
<dbReference type="GO" id="GO:0005886">
    <property type="term" value="C:plasma membrane"/>
    <property type="evidence" value="ECO:0007669"/>
    <property type="project" value="UniProtKB-SubCell"/>
</dbReference>
<dbReference type="HAMAP" id="MF_01361">
    <property type="entry name" value="UPF0391"/>
    <property type="match status" value="1"/>
</dbReference>
<dbReference type="InterPro" id="IPR009760">
    <property type="entry name" value="DUF1328"/>
</dbReference>
<dbReference type="NCBIfam" id="NF010229">
    <property type="entry name" value="PRK13682.1-4"/>
    <property type="match status" value="1"/>
</dbReference>
<dbReference type="NCBIfam" id="NF010230">
    <property type="entry name" value="PRK13682.1-5"/>
    <property type="match status" value="1"/>
</dbReference>
<dbReference type="Pfam" id="PF07043">
    <property type="entry name" value="DUF1328"/>
    <property type="match status" value="1"/>
</dbReference>
<dbReference type="PIRSF" id="PIRSF036466">
    <property type="entry name" value="UCP036466"/>
    <property type="match status" value="1"/>
</dbReference>
<gene>
    <name type="ordered locus">YPA_3852</name>
</gene>
<proteinExistence type="inferred from homology"/>
<name>Y3852_YERPA</name>
<organism>
    <name type="scientific">Yersinia pestis bv. Antiqua (strain Antiqua)</name>
    <dbReference type="NCBI Taxonomy" id="360102"/>
    <lineage>
        <taxon>Bacteria</taxon>
        <taxon>Pseudomonadati</taxon>
        <taxon>Pseudomonadota</taxon>
        <taxon>Gammaproteobacteria</taxon>
        <taxon>Enterobacterales</taxon>
        <taxon>Yersiniaceae</taxon>
        <taxon>Yersinia</taxon>
    </lineage>
</organism>
<accession>Q1C158</accession>
<protein>
    <recommendedName>
        <fullName evidence="1">UPF0391 membrane protein YPA_3852</fullName>
    </recommendedName>
</protein>
<sequence length="53" mass="5723">MFRWGIIFLIIALIEAALGFGGLAGTAAWAAKVVFVVGIILFLISLFTGRKRL</sequence>
<evidence type="ECO:0000255" key="1">
    <source>
        <dbReference type="HAMAP-Rule" id="MF_01361"/>
    </source>
</evidence>